<accession>Q7K2B0</accession>
<feature type="chain" id="PRO_0000390457" description="Ribosomal RNA-processing protein 8">
    <location>
        <begin position="1"/>
        <end position="358"/>
    </location>
</feature>
<feature type="region of interest" description="Disordered" evidence="3">
    <location>
        <begin position="1"/>
        <end position="81"/>
    </location>
</feature>
<feature type="compositionally biased region" description="Basic residues" evidence="3">
    <location>
        <begin position="30"/>
        <end position="44"/>
    </location>
</feature>
<feature type="binding site" evidence="2">
    <location>
        <position position="185"/>
    </location>
    <ligand>
        <name>S-adenosyl-L-methionine</name>
        <dbReference type="ChEBI" id="CHEBI:59789"/>
    </ligand>
</feature>
<feature type="binding site" evidence="2">
    <location>
        <position position="220"/>
    </location>
    <ligand>
        <name>S-adenosyl-L-methionine</name>
        <dbReference type="ChEBI" id="CHEBI:59789"/>
    </ligand>
</feature>
<feature type="binding site" evidence="2">
    <location>
        <position position="238"/>
    </location>
    <ligand>
        <name>S-adenosyl-L-methionine</name>
        <dbReference type="ChEBI" id="CHEBI:59789"/>
    </ligand>
</feature>
<feature type="binding site" evidence="2">
    <location>
        <position position="267"/>
    </location>
    <ligand>
        <name>S-adenosyl-L-methionine</name>
        <dbReference type="ChEBI" id="CHEBI:59789"/>
    </ligand>
</feature>
<feature type="modified residue" description="Phosphoserine" evidence="4">
    <location>
        <position position="75"/>
    </location>
</feature>
<feature type="modified residue" description="Phosphoserine" evidence="4">
    <location>
        <position position="76"/>
    </location>
</feature>
<organism>
    <name type="scientific">Drosophila melanogaster</name>
    <name type="common">Fruit fly</name>
    <dbReference type="NCBI Taxonomy" id="7227"/>
    <lineage>
        <taxon>Eukaryota</taxon>
        <taxon>Metazoa</taxon>
        <taxon>Ecdysozoa</taxon>
        <taxon>Arthropoda</taxon>
        <taxon>Hexapoda</taxon>
        <taxon>Insecta</taxon>
        <taxon>Pterygota</taxon>
        <taxon>Neoptera</taxon>
        <taxon>Endopterygota</taxon>
        <taxon>Diptera</taxon>
        <taxon>Brachycera</taxon>
        <taxon>Muscomorpha</taxon>
        <taxon>Ephydroidea</taxon>
        <taxon>Drosophilidae</taxon>
        <taxon>Drosophila</taxon>
        <taxon>Sophophora</taxon>
    </lineage>
</organism>
<evidence type="ECO:0000250" key="1"/>
<evidence type="ECO:0000250" key="2">
    <source>
        <dbReference type="UniProtKB" id="O43159"/>
    </source>
</evidence>
<evidence type="ECO:0000256" key="3">
    <source>
        <dbReference type="SAM" id="MobiDB-lite"/>
    </source>
</evidence>
<evidence type="ECO:0000269" key="4">
    <source>
    </source>
</evidence>
<evidence type="ECO:0000305" key="5"/>
<proteinExistence type="evidence at protein level"/>
<sequence length="358" mass="40288">MKPFEVPPWEEGADIIEFEPVNPSGNGVAAKKKPKKKKPKKKKAAVPNENLNVNKAAEKFTYRQGRGPLAPPQDSSDDDYEDVEDGIRAMHKVKSGRIEKQRPPTQATKGGKKELKLKPELAQAALEAMEATSSTTPAANSLASKLQSELLGGRFRYINEQLYSTTSRKAEALFRKDSSAFEAYHAGYRQQVEKWPINPLNRIIKTIKKIPKTAIIGDFGCGEGKLAQSVPNKVYSMDLVAARSDIIACNITDTPLQARTLDVAVYCLSLMGTDLNEFFLEANRVLKLHGTVYIAEIQSRFQDVREFVRCLNACGFDLNKKDVAVNYFYFFQFKKMRHVPKNTKMKAFSLKPCLYRKR</sequence>
<comment type="function">
    <text evidence="1">Probable methyltransferase required to silence rDNA.</text>
</comment>
<comment type="subcellular location">
    <subcellularLocation>
        <location evidence="1">Nucleus</location>
        <location evidence="1">Nucleolus</location>
    </subcellularLocation>
</comment>
<comment type="similarity">
    <text evidence="5">Belongs to the methyltransferase superfamily. RRP8 family.</text>
</comment>
<reference key="1">
    <citation type="journal article" date="2000" name="Science">
        <title>The genome sequence of Drosophila melanogaster.</title>
        <authorList>
            <person name="Adams M.D."/>
            <person name="Celniker S.E."/>
            <person name="Holt R.A."/>
            <person name="Evans C.A."/>
            <person name="Gocayne J.D."/>
            <person name="Amanatides P.G."/>
            <person name="Scherer S.E."/>
            <person name="Li P.W."/>
            <person name="Hoskins R.A."/>
            <person name="Galle R.F."/>
            <person name="George R.A."/>
            <person name="Lewis S.E."/>
            <person name="Richards S."/>
            <person name="Ashburner M."/>
            <person name="Henderson S.N."/>
            <person name="Sutton G.G."/>
            <person name="Wortman J.R."/>
            <person name="Yandell M.D."/>
            <person name="Zhang Q."/>
            <person name="Chen L.X."/>
            <person name="Brandon R.C."/>
            <person name="Rogers Y.-H.C."/>
            <person name="Blazej R.G."/>
            <person name="Champe M."/>
            <person name="Pfeiffer B.D."/>
            <person name="Wan K.H."/>
            <person name="Doyle C."/>
            <person name="Baxter E.G."/>
            <person name="Helt G."/>
            <person name="Nelson C.R."/>
            <person name="Miklos G.L.G."/>
            <person name="Abril J.F."/>
            <person name="Agbayani A."/>
            <person name="An H.-J."/>
            <person name="Andrews-Pfannkoch C."/>
            <person name="Baldwin D."/>
            <person name="Ballew R.M."/>
            <person name="Basu A."/>
            <person name="Baxendale J."/>
            <person name="Bayraktaroglu L."/>
            <person name="Beasley E.M."/>
            <person name="Beeson K.Y."/>
            <person name="Benos P.V."/>
            <person name="Berman B.P."/>
            <person name="Bhandari D."/>
            <person name="Bolshakov S."/>
            <person name="Borkova D."/>
            <person name="Botchan M.R."/>
            <person name="Bouck J."/>
            <person name="Brokstein P."/>
            <person name="Brottier P."/>
            <person name="Burtis K.C."/>
            <person name="Busam D.A."/>
            <person name="Butler H."/>
            <person name="Cadieu E."/>
            <person name="Center A."/>
            <person name="Chandra I."/>
            <person name="Cherry J.M."/>
            <person name="Cawley S."/>
            <person name="Dahlke C."/>
            <person name="Davenport L.B."/>
            <person name="Davies P."/>
            <person name="de Pablos B."/>
            <person name="Delcher A."/>
            <person name="Deng Z."/>
            <person name="Mays A.D."/>
            <person name="Dew I."/>
            <person name="Dietz S.M."/>
            <person name="Dodson K."/>
            <person name="Doup L.E."/>
            <person name="Downes M."/>
            <person name="Dugan-Rocha S."/>
            <person name="Dunkov B.C."/>
            <person name="Dunn P."/>
            <person name="Durbin K.J."/>
            <person name="Evangelista C.C."/>
            <person name="Ferraz C."/>
            <person name="Ferriera S."/>
            <person name="Fleischmann W."/>
            <person name="Fosler C."/>
            <person name="Gabrielian A.E."/>
            <person name="Garg N.S."/>
            <person name="Gelbart W.M."/>
            <person name="Glasser K."/>
            <person name="Glodek A."/>
            <person name="Gong F."/>
            <person name="Gorrell J.H."/>
            <person name="Gu Z."/>
            <person name="Guan P."/>
            <person name="Harris M."/>
            <person name="Harris N.L."/>
            <person name="Harvey D.A."/>
            <person name="Heiman T.J."/>
            <person name="Hernandez J.R."/>
            <person name="Houck J."/>
            <person name="Hostin D."/>
            <person name="Houston K.A."/>
            <person name="Howland T.J."/>
            <person name="Wei M.-H."/>
            <person name="Ibegwam C."/>
            <person name="Jalali M."/>
            <person name="Kalush F."/>
            <person name="Karpen G.H."/>
            <person name="Ke Z."/>
            <person name="Kennison J.A."/>
            <person name="Ketchum K.A."/>
            <person name="Kimmel B.E."/>
            <person name="Kodira C.D."/>
            <person name="Kraft C.L."/>
            <person name="Kravitz S."/>
            <person name="Kulp D."/>
            <person name="Lai Z."/>
            <person name="Lasko P."/>
            <person name="Lei Y."/>
            <person name="Levitsky A.A."/>
            <person name="Li J.H."/>
            <person name="Li Z."/>
            <person name="Liang Y."/>
            <person name="Lin X."/>
            <person name="Liu X."/>
            <person name="Mattei B."/>
            <person name="McIntosh T.C."/>
            <person name="McLeod M.P."/>
            <person name="McPherson D."/>
            <person name="Merkulov G."/>
            <person name="Milshina N.V."/>
            <person name="Mobarry C."/>
            <person name="Morris J."/>
            <person name="Moshrefi A."/>
            <person name="Mount S.M."/>
            <person name="Moy M."/>
            <person name="Murphy B."/>
            <person name="Murphy L."/>
            <person name="Muzny D.M."/>
            <person name="Nelson D.L."/>
            <person name="Nelson D.R."/>
            <person name="Nelson K.A."/>
            <person name="Nixon K."/>
            <person name="Nusskern D.R."/>
            <person name="Pacleb J.M."/>
            <person name="Palazzolo M."/>
            <person name="Pittman G.S."/>
            <person name="Pan S."/>
            <person name="Pollard J."/>
            <person name="Puri V."/>
            <person name="Reese M.G."/>
            <person name="Reinert K."/>
            <person name="Remington K."/>
            <person name="Saunders R.D.C."/>
            <person name="Scheeler F."/>
            <person name="Shen H."/>
            <person name="Shue B.C."/>
            <person name="Siden-Kiamos I."/>
            <person name="Simpson M."/>
            <person name="Skupski M.P."/>
            <person name="Smith T.J."/>
            <person name="Spier E."/>
            <person name="Spradling A.C."/>
            <person name="Stapleton M."/>
            <person name="Strong R."/>
            <person name="Sun E."/>
            <person name="Svirskas R."/>
            <person name="Tector C."/>
            <person name="Turner R."/>
            <person name="Venter E."/>
            <person name="Wang A.H."/>
            <person name="Wang X."/>
            <person name="Wang Z.-Y."/>
            <person name="Wassarman D.A."/>
            <person name="Weinstock G.M."/>
            <person name="Weissenbach J."/>
            <person name="Williams S.M."/>
            <person name="Woodage T."/>
            <person name="Worley K.C."/>
            <person name="Wu D."/>
            <person name="Yang S."/>
            <person name="Yao Q.A."/>
            <person name="Ye J."/>
            <person name="Yeh R.-F."/>
            <person name="Zaveri J.S."/>
            <person name="Zhan M."/>
            <person name="Zhang G."/>
            <person name="Zhao Q."/>
            <person name="Zheng L."/>
            <person name="Zheng X.H."/>
            <person name="Zhong F.N."/>
            <person name="Zhong W."/>
            <person name="Zhou X."/>
            <person name="Zhu S.C."/>
            <person name="Zhu X."/>
            <person name="Smith H.O."/>
            <person name="Gibbs R.A."/>
            <person name="Myers E.W."/>
            <person name="Rubin G.M."/>
            <person name="Venter J.C."/>
        </authorList>
    </citation>
    <scope>NUCLEOTIDE SEQUENCE [LARGE SCALE GENOMIC DNA]</scope>
    <source>
        <strain>Berkeley</strain>
    </source>
</reference>
<reference key="2">
    <citation type="journal article" date="2002" name="Genome Biol.">
        <title>Annotation of the Drosophila melanogaster euchromatic genome: a systematic review.</title>
        <authorList>
            <person name="Misra S."/>
            <person name="Crosby M.A."/>
            <person name="Mungall C.J."/>
            <person name="Matthews B.B."/>
            <person name="Campbell K.S."/>
            <person name="Hradecky P."/>
            <person name="Huang Y."/>
            <person name="Kaminker J.S."/>
            <person name="Millburn G.H."/>
            <person name="Prochnik S.E."/>
            <person name="Smith C.D."/>
            <person name="Tupy J.L."/>
            <person name="Whitfield E.J."/>
            <person name="Bayraktaroglu L."/>
            <person name="Berman B.P."/>
            <person name="Bettencourt B.R."/>
            <person name="Celniker S.E."/>
            <person name="de Grey A.D.N.J."/>
            <person name="Drysdale R.A."/>
            <person name="Harris N.L."/>
            <person name="Richter J."/>
            <person name="Russo S."/>
            <person name="Schroeder A.J."/>
            <person name="Shu S.Q."/>
            <person name="Stapleton M."/>
            <person name="Yamada C."/>
            <person name="Ashburner M."/>
            <person name="Gelbart W.M."/>
            <person name="Rubin G.M."/>
            <person name="Lewis S.E."/>
        </authorList>
    </citation>
    <scope>GENOME REANNOTATION</scope>
    <source>
        <strain>Berkeley</strain>
    </source>
</reference>
<reference key="3">
    <citation type="journal article" date="2002" name="Genome Biol.">
        <title>A Drosophila full-length cDNA resource.</title>
        <authorList>
            <person name="Stapleton M."/>
            <person name="Carlson J.W."/>
            <person name="Brokstein P."/>
            <person name="Yu C."/>
            <person name="Champe M."/>
            <person name="George R.A."/>
            <person name="Guarin H."/>
            <person name="Kronmiller B."/>
            <person name="Pacleb J.M."/>
            <person name="Park S."/>
            <person name="Wan K.H."/>
            <person name="Rubin G.M."/>
            <person name="Celniker S.E."/>
        </authorList>
    </citation>
    <scope>NUCLEOTIDE SEQUENCE [LARGE SCALE MRNA]</scope>
    <source>
        <strain>Berkeley</strain>
        <tissue>Embryo</tissue>
    </source>
</reference>
<reference key="4">
    <citation type="journal article" date="2008" name="J. Proteome Res.">
        <title>Phosphoproteome analysis of Drosophila melanogaster embryos.</title>
        <authorList>
            <person name="Zhai B."/>
            <person name="Villen J."/>
            <person name="Beausoleil S.A."/>
            <person name="Mintseris J."/>
            <person name="Gygi S.P."/>
        </authorList>
    </citation>
    <scope>PHOSPHORYLATION [LARGE SCALE ANALYSIS] AT SER-75 AND SER-76</scope>
    <scope>IDENTIFICATION BY MASS SPECTROMETRY</scope>
    <source>
        <tissue>Embryo</tissue>
    </source>
</reference>
<dbReference type="EC" id="2.1.1.-"/>
<dbReference type="EMBL" id="AE013599">
    <property type="protein sequence ID" value="AAF57594.1"/>
    <property type="molecule type" value="Genomic_DNA"/>
</dbReference>
<dbReference type="EMBL" id="AY061131">
    <property type="protein sequence ID" value="AAL28679.1"/>
    <property type="molecule type" value="mRNA"/>
</dbReference>
<dbReference type="RefSeq" id="NP_611400.1">
    <property type="nucleotide sequence ID" value="NM_137556.4"/>
</dbReference>
<dbReference type="SMR" id="Q7K2B0"/>
<dbReference type="BioGRID" id="62869">
    <property type="interactions" value="1"/>
</dbReference>
<dbReference type="FunCoup" id="Q7K2B0">
    <property type="interactions" value="1594"/>
</dbReference>
<dbReference type="IntAct" id="Q7K2B0">
    <property type="interactions" value="46"/>
</dbReference>
<dbReference type="STRING" id="7227.FBpp0085693"/>
<dbReference type="iPTMnet" id="Q7K2B0"/>
<dbReference type="PaxDb" id="7227-FBpp0085693"/>
<dbReference type="DNASU" id="37204"/>
<dbReference type="EnsemblMetazoa" id="FBtr0086505">
    <property type="protein sequence ID" value="FBpp0085693"/>
    <property type="gene ID" value="FBgn0034422"/>
</dbReference>
<dbReference type="GeneID" id="37204"/>
<dbReference type="KEGG" id="dme:Dmel_CG7137"/>
<dbReference type="UCSC" id="CG7137-RA">
    <property type="organism name" value="d. melanogaster"/>
</dbReference>
<dbReference type="AGR" id="FB:FBgn0034422"/>
<dbReference type="FlyBase" id="FBgn0034422">
    <property type="gene designation" value="CG7137"/>
</dbReference>
<dbReference type="VEuPathDB" id="VectorBase:FBgn0034422"/>
<dbReference type="eggNOG" id="KOG3045">
    <property type="taxonomic scope" value="Eukaryota"/>
</dbReference>
<dbReference type="GeneTree" id="ENSGT00390000006189"/>
<dbReference type="HOGENOM" id="CLU_027694_2_0_1"/>
<dbReference type="InParanoid" id="Q7K2B0"/>
<dbReference type="OMA" id="KWPTNPL"/>
<dbReference type="OrthoDB" id="10258825at2759"/>
<dbReference type="PhylomeDB" id="Q7K2B0"/>
<dbReference type="Reactome" id="R-DME-427359">
    <property type="pathway name" value="SIRT1 negatively regulates rRNA expression"/>
</dbReference>
<dbReference type="BioGRID-ORCS" id="37204">
    <property type="hits" value="0 hits in 1 CRISPR screen"/>
</dbReference>
<dbReference type="GenomeRNAi" id="37204"/>
<dbReference type="PRO" id="PR:Q7K2B0"/>
<dbReference type="Proteomes" id="UP000000803">
    <property type="component" value="Chromosome 2R"/>
</dbReference>
<dbReference type="Bgee" id="FBgn0034422">
    <property type="expression patterns" value="Expressed in eye disc (Drosophila) and 56 other cell types or tissues"/>
</dbReference>
<dbReference type="GO" id="GO:0005677">
    <property type="term" value="C:chromatin silencing complex"/>
    <property type="evidence" value="ECO:0000250"/>
    <property type="project" value="UniProtKB"/>
</dbReference>
<dbReference type="GO" id="GO:0005730">
    <property type="term" value="C:nucleolus"/>
    <property type="evidence" value="ECO:0000250"/>
    <property type="project" value="UniProtKB"/>
</dbReference>
<dbReference type="GO" id="GO:0033553">
    <property type="term" value="C:rDNA heterochromatin"/>
    <property type="evidence" value="ECO:0000250"/>
    <property type="project" value="UniProtKB"/>
</dbReference>
<dbReference type="GO" id="GO:0035064">
    <property type="term" value="F:methylated histone binding"/>
    <property type="evidence" value="ECO:0000250"/>
    <property type="project" value="UniProtKB"/>
</dbReference>
<dbReference type="GO" id="GO:0016433">
    <property type="term" value="F:rRNA (adenine) methyltransferase activity"/>
    <property type="evidence" value="ECO:0000250"/>
    <property type="project" value="FlyBase"/>
</dbReference>
<dbReference type="GO" id="GO:0042149">
    <property type="term" value="P:cellular response to glucose starvation"/>
    <property type="evidence" value="ECO:0000318"/>
    <property type="project" value="GO_Central"/>
</dbReference>
<dbReference type="GO" id="GO:0000183">
    <property type="term" value="P:rDNA heterochromatin formation"/>
    <property type="evidence" value="ECO:0000250"/>
    <property type="project" value="UniProtKB"/>
</dbReference>
<dbReference type="GO" id="GO:0046015">
    <property type="term" value="P:regulation of transcription by glucose"/>
    <property type="evidence" value="ECO:0000318"/>
    <property type="project" value="GO_Central"/>
</dbReference>
<dbReference type="FunFam" id="1.10.10.2150:FF:000001">
    <property type="entry name" value="Ribosomal RNA-processing protein 8"/>
    <property type="match status" value="1"/>
</dbReference>
<dbReference type="FunFam" id="3.40.50.150:FF:000068">
    <property type="entry name" value="Ribosomal RNA-processing protein 8"/>
    <property type="match status" value="1"/>
</dbReference>
<dbReference type="Gene3D" id="1.10.10.2150">
    <property type="entry name" value="Ribosomal RNA-processing protein 8, N-terminal domain"/>
    <property type="match status" value="1"/>
</dbReference>
<dbReference type="Gene3D" id="3.40.50.150">
    <property type="entry name" value="Vaccinia Virus protein VP39"/>
    <property type="match status" value="1"/>
</dbReference>
<dbReference type="InterPro" id="IPR007823">
    <property type="entry name" value="RRP8"/>
</dbReference>
<dbReference type="InterPro" id="IPR042036">
    <property type="entry name" value="RRP8_N"/>
</dbReference>
<dbReference type="InterPro" id="IPR029063">
    <property type="entry name" value="SAM-dependent_MTases_sf"/>
</dbReference>
<dbReference type="PANTHER" id="PTHR12787">
    <property type="entry name" value="RIBOSOMAL RNA-PROCESSING PROTEIN 8"/>
    <property type="match status" value="1"/>
</dbReference>
<dbReference type="PANTHER" id="PTHR12787:SF0">
    <property type="entry name" value="RIBOSOMAL RNA-PROCESSING PROTEIN 8"/>
    <property type="match status" value="1"/>
</dbReference>
<dbReference type="Pfam" id="PF05148">
    <property type="entry name" value="Methyltransf_8"/>
    <property type="match status" value="1"/>
</dbReference>
<dbReference type="SUPFAM" id="SSF53335">
    <property type="entry name" value="S-adenosyl-L-methionine-dependent methyltransferases"/>
    <property type="match status" value="1"/>
</dbReference>
<gene>
    <name type="ORF">CG7137</name>
</gene>
<protein>
    <recommendedName>
        <fullName>Ribosomal RNA-processing protein 8</fullName>
        <ecNumber>2.1.1.-</ecNumber>
    </recommendedName>
</protein>
<name>RRP8_DROME</name>
<keyword id="KW-0156">Chromatin regulator</keyword>
<keyword id="KW-0489">Methyltransferase</keyword>
<keyword id="KW-0539">Nucleus</keyword>
<keyword id="KW-0597">Phosphoprotein</keyword>
<keyword id="KW-1185">Reference proteome</keyword>
<keyword id="KW-0678">Repressor</keyword>
<keyword id="KW-0698">rRNA processing</keyword>
<keyword id="KW-0949">S-adenosyl-L-methionine</keyword>
<keyword id="KW-0804">Transcription</keyword>
<keyword id="KW-0805">Transcription regulation</keyword>
<keyword id="KW-0808">Transferase</keyword>